<organism>
    <name type="scientific">Neisseria gonorrhoeae (strain NCCP11945)</name>
    <dbReference type="NCBI Taxonomy" id="521006"/>
    <lineage>
        <taxon>Bacteria</taxon>
        <taxon>Pseudomonadati</taxon>
        <taxon>Pseudomonadota</taxon>
        <taxon>Betaproteobacteria</taxon>
        <taxon>Neisseriales</taxon>
        <taxon>Neisseriaceae</taxon>
        <taxon>Neisseria</taxon>
    </lineage>
</organism>
<protein>
    <recommendedName>
        <fullName evidence="1">Peptide chain release factor 3</fullName>
        <shortName evidence="1">RF-3</shortName>
    </recommendedName>
</protein>
<sequence length="531" mass="59447">MSQEILDQVRRRRTFAIISHPDAGKTTLTEKLLLFSGAIQSAGTVKGKKTGKFATSDWMDIEKQRGISVASSVMQFDYKDHTVNLLDTPGHQDFSEDTYRVLTAVDSALMVIDAAKGVEAQTIKLLNVCRLRDTPIVTFMNKYDREVRDSLELLDEVEDILQIRCAPVTWPIGMGKNFKGVYHILNDEIYLFEAGGERLPHEFGIIKGINNPELEQRFPLEIQQLRDEIELVQAASNEFNLDEFLAGELTPVFFGSAINNFGIQEILNSLIDWAPAPKPRDATMRMVGPDEPKFSGFIFKIQANMDPKHRDRIAFLRVCSGKFERGMKMKHLRINREIAASSVVTFMSHNRELAEEAYAGDIIGIPNHGNIQIGDSFSEGEQLAFTGIPFFAPELFRSVRIKNPLKIKQLQKGLQQLGEEGAVQVFKPMSGADLILGAVGVLQFEVVTSRLANEYGVEAVFDSASIWSARWVSCDDKKKLAEFEKANAGNLAIDAGGNLAYLAPNRVNLGLTQERWPDIVFHETREHSVKL</sequence>
<feature type="chain" id="PRO_1000092489" description="Peptide chain release factor 3">
    <location>
        <begin position="1"/>
        <end position="531"/>
    </location>
</feature>
<feature type="domain" description="tr-type G">
    <location>
        <begin position="10"/>
        <end position="278"/>
    </location>
</feature>
<feature type="binding site" evidence="1">
    <location>
        <begin position="19"/>
        <end position="26"/>
    </location>
    <ligand>
        <name>GTP</name>
        <dbReference type="ChEBI" id="CHEBI:37565"/>
    </ligand>
</feature>
<feature type="binding site" evidence="1">
    <location>
        <begin position="87"/>
        <end position="91"/>
    </location>
    <ligand>
        <name>GTP</name>
        <dbReference type="ChEBI" id="CHEBI:37565"/>
    </ligand>
</feature>
<feature type="binding site" evidence="1">
    <location>
        <begin position="141"/>
        <end position="144"/>
    </location>
    <ligand>
        <name>GTP</name>
        <dbReference type="ChEBI" id="CHEBI:37565"/>
    </ligand>
</feature>
<name>RF3_NEIG2</name>
<proteinExistence type="inferred from homology"/>
<keyword id="KW-0963">Cytoplasm</keyword>
<keyword id="KW-0342">GTP-binding</keyword>
<keyword id="KW-0547">Nucleotide-binding</keyword>
<keyword id="KW-0648">Protein biosynthesis</keyword>
<comment type="function">
    <text evidence="1">Increases the formation of ribosomal termination complexes and stimulates activities of RF-1 and RF-2. It binds guanine nucleotides and has strong preference for UGA stop codons. It may interact directly with the ribosome. The stimulation of RF-1 and RF-2 is significantly reduced by GTP and GDP, but not by GMP.</text>
</comment>
<comment type="subcellular location">
    <subcellularLocation>
        <location evidence="1">Cytoplasm</location>
    </subcellularLocation>
</comment>
<comment type="similarity">
    <text evidence="1">Belongs to the TRAFAC class translation factor GTPase superfamily. Classic translation factor GTPase family. PrfC subfamily.</text>
</comment>
<evidence type="ECO:0000255" key="1">
    <source>
        <dbReference type="HAMAP-Rule" id="MF_00072"/>
    </source>
</evidence>
<gene>
    <name evidence="1" type="primary">prfC</name>
    <name type="ordered locus">NGK_0341</name>
</gene>
<accession>B4RJN1</accession>
<dbReference type="EMBL" id="CP001050">
    <property type="protein sequence ID" value="ACF29034.1"/>
    <property type="molecule type" value="Genomic_DNA"/>
</dbReference>
<dbReference type="RefSeq" id="WP_012503412.1">
    <property type="nucleotide sequence ID" value="NC_011035.1"/>
</dbReference>
<dbReference type="SMR" id="B4RJN1"/>
<dbReference type="KEGG" id="ngk:NGK_0341"/>
<dbReference type="HOGENOM" id="CLU_002794_2_1_4"/>
<dbReference type="Proteomes" id="UP000002564">
    <property type="component" value="Chromosome"/>
</dbReference>
<dbReference type="GO" id="GO:0005829">
    <property type="term" value="C:cytosol"/>
    <property type="evidence" value="ECO:0007669"/>
    <property type="project" value="TreeGrafter"/>
</dbReference>
<dbReference type="GO" id="GO:0005525">
    <property type="term" value="F:GTP binding"/>
    <property type="evidence" value="ECO:0007669"/>
    <property type="project" value="UniProtKB-UniRule"/>
</dbReference>
<dbReference type="GO" id="GO:0003924">
    <property type="term" value="F:GTPase activity"/>
    <property type="evidence" value="ECO:0007669"/>
    <property type="project" value="InterPro"/>
</dbReference>
<dbReference type="GO" id="GO:0016150">
    <property type="term" value="F:translation release factor activity, codon nonspecific"/>
    <property type="evidence" value="ECO:0007669"/>
    <property type="project" value="TreeGrafter"/>
</dbReference>
<dbReference type="GO" id="GO:0016149">
    <property type="term" value="F:translation release factor activity, codon specific"/>
    <property type="evidence" value="ECO:0007669"/>
    <property type="project" value="UniProtKB-UniRule"/>
</dbReference>
<dbReference type="GO" id="GO:0006449">
    <property type="term" value="P:regulation of translational termination"/>
    <property type="evidence" value="ECO:0007669"/>
    <property type="project" value="UniProtKB-UniRule"/>
</dbReference>
<dbReference type="CDD" id="cd04169">
    <property type="entry name" value="RF3"/>
    <property type="match status" value="1"/>
</dbReference>
<dbReference type="CDD" id="cd03689">
    <property type="entry name" value="RF3_II"/>
    <property type="match status" value="1"/>
</dbReference>
<dbReference type="CDD" id="cd16259">
    <property type="entry name" value="RF3_III"/>
    <property type="match status" value="1"/>
</dbReference>
<dbReference type="FunFam" id="2.40.30.10:FF:000040">
    <property type="entry name" value="Peptide chain release factor 3"/>
    <property type="match status" value="1"/>
</dbReference>
<dbReference type="FunFam" id="3.30.70.3280:FF:000001">
    <property type="entry name" value="Peptide chain release factor 3"/>
    <property type="match status" value="1"/>
</dbReference>
<dbReference type="FunFam" id="3.40.50.300:FF:000542">
    <property type="entry name" value="Peptide chain release factor 3"/>
    <property type="match status" value="1"/>
</dbReference>
<dbReference type="Gene3D" id="3.40.50.300">
    <property type="entry name" value="P-loop containing nucleotide triphosphate hydrolases"/>
    <property type="match status" value="2"/>
</dbReference>
<dbReference type="Gene3D" id="3.30.70.3280">
    <property type="entry name" value="Peptide chain release factor 3, domain III"/>
    <property type="match status" value="1"/>
</dbReference>
<dbReference type="HAMAP" id="MF_00072">
    <property type="entry name" value="Rel_fac_3"/>
    <property type="match status" value="1"/>
</dbReference>
<dbReference type="InterPro" id="IPR053905">
    <property type="entry name" value="EF-G-like_DII"/>
</dbReference>
<dbReference type="InterPro" id="IPR035647">
    <property type="entry name" value="EFG_III/V"/>
</dbReference>
<dbReference type="InterPro" id="IPR031157">
    <property type="entry name" value="G_TR_CS"/>
</dbReference>
<dbReference type="InterPro" id="IPR027417">
    <property type="entry name" value="P-loop_NTPase"/>
</dbReference>
<dbReference type="InterPro" id="IPR004548">
    <property type="entry name" value="PrfC"/>
</dbReference>
<dbReference type="InterPro" id="IPR032090">
    <property type="entry name" value="RF3_C"/>
</dbReference>
<dbReference type="InterPro" id="IPR038467">
    <property type="entry name" value="RF3_dom_3_sf"/>
</dbReference>
<dbReference type="InterPro" id="IPR041732">
    <property type="entry name" value="RF3_GTP-bd"/>
</dbReference>
<dbReference type="InterPro" id="IPR005225">
    <property type="entry name" value="Small_GTP-bd"/>
</dbReference>
<dbReference type="InterPro" id="IPR000795">
    <property type="entry name" value="T_Tr_GTP-bd_dom"/>
</dbReference>
<dbReference type="InterPro" id="IPR009000">
    <property type="entry name" value="Transl_B-barrel_sf"/>
</dbReference>
<dbReference type="NCBIfam" id="TIGR00503">
    <property type="entry name" value="prfC"/>
    <property type="match status" value="1"/>
</dbReference>
<dbReference type="NCBIfam" id="NF001964">
    <property type="entry name" value="PRK00741.1"/>
    <property type="match status" value="1"/>
</dbReference>
<dbReference type="NCBIfam" id="TIGR00231">
    <property type="entry name" value="small_GTP"/>
    <property type="match status" value="1"/>
</dbReference>
<dbReference type="PANTHER" id="PTHR43556">
    <property type="entry name" value="PEPTIDE CHAIN RELEASE FACTOR RF3"/>
    <property type="match status" value="1"/>
</dbReference>
<dbReference type="PANTHER" id="PTHR43556:SF2">
    <property type="entry name" value="PEPTIDE CHAIN RELEASE FACTOR RF3"/>
    <property type="match status" value="1"/>
</dbReference>
<dbReference type="Pfam" id="PF22042">
    <property type="entry name" value="EF-G_D2"/>
    <property type="match status" value="1"/>
</dbReference>
<dbReference type="Pfam" id="PF00009">
    <property type="entry name" value="GTP_EFTU"/>
    <property type="match status" value="1"/>
</dbReference>
<dbReference type="Pfam" id="PF16658">
    <property type="entry name" value="RF3_C"/>
    <property type="match status" value="1"/>
</dbReference>
<dbReference type="PRINTS" id="PR00315">
    <property type="entry name" value="ELONGATNFCT"/>
</dbReference>
<dbReference type="SUPFAM" id="SSF54980">
    <property type="entry name" value="EF-G C-terminal domain-like"/>
    <property type="match status" value="1"/>
</dbReference>
<dbReference type="SUPFAM" id="SSF52540">
    <property type="entry name" value="P-loop containing nucleoside triphosphate hydrolases"/>
    <property type="match status" value="1"/>
</dbReference>
<dbReference type="SUPFAM" id="SSF50447">
    <property type="entry name" value="Translation proteins"/>
    <property type="match status" value="1"/>
</dbReference>
<dbReference type="PROSITE" id="PS00301">
    <property type="entry name" value="G_TR_1"/>
    <property type="match status" value="1"/>
</dbReference>
<dbReference type="PROSITE" id="PS51722">
    <property type="entry name" value="G_TR_2"/>
    <property type="match status" value="1"/>
</dbReference>
<reference key="1">
    <citation type="journal article" date="2008" name="J. Bacteriol.">
        <title>Complete genome sequence of Neisseria gonorrhoeae NCCP11945.</title>
        <authorList>
            <person name="Chung G.T."/>
            <person name="Yoo J.S."/>
            <person name="Oh H.B."/>
            <person name="Lee Y.S."/>
            <person name="Cha S.H."/>
            <person name="Kim S.J."/>
            <person name="Yoo C.K."/>
        </authorList>
    </citation>
    <scope>NUCLEOTIDE SEQUENCE [LARGE SCALE GENOMIC DNA]</scope>
    <source>
        <strain>NCCP11945</strain>
    </source>
</reference>